<comment type="function">
    <text evidence="1">Component of the acetyl coenzyme A carboxylase (ACC) complex. First, biotin carboxylase catalyzes the carboxylation of biotin on its carrier protein (BCCP) and then the CO(2) group is transferred by the carboxyltransferase to acetyl-CoA to form malonyl-CoA.</text>
</comment>
<comment type="catalytic activity">
    <reaction evidence="1">
        <text>N(6)-carboxybiotinyl-L-lysyl-[protein] + acetyl-CoA = N(6)-biotinyl-L-lysyl-[protein] + malonyl-CoA</text>
        <dbReference type="Rhea" id="RHEA:54728"/>
        <dbReference type="Rhea" id="RHEA-COMP:10505"/>
        <dbReference type="Rhea" id="RHEA-COMP:10506"/>
        <dbReference type="ChEBI" id="CHEBI:57288"/>
        <dbReference type="ChEBI" id="CHEBI:57384"/>
        <dbReference type="ChEBI" id="CHEBI:83144"/>
        <dbReference type="ChEBI" id="CHEBI:83145"/>
        <dbReference type="EC" id="2.1.3.15"/>
    </reaction>
</comment>
<comment type="pathway">
    <text evidence="1">Lipid metabolism; malonyl-CoA biosynthesis; malonyl-CoA from acetyl-CoA: step 1/1.</text>
</comment>
<comment type="subunit">
    <text evidence="1">Acetyl-CoA carboxylase is a heterohexamer composed of biotin carboxyl carrier protein (AccB), biotin carboxylase (AccC) and two subunits each of ACCase subunit alpha (AccA) and ACCase subunit beta (AccD).</text>
</comment>
<comment type="subcellular location">
    <subcellularLocation>
        <location evidence="1">Cytoplasm</location>
    </subcellularLocation>
</comment>
<comment type="similarity">
    <text evidence="1">Belongs to the AccA family.</text>
</comment>
<keyword id="KW-0067">ATP-binding</keyword>
<keyword id="KW-0963">Cytoplasm</keyword>
<keyword id="KW-0275">Fatty acid biosynthesis</keyword>
<keyword id="KW-0276">Fatty acid metabolism</keyword>
<keyword id="KW-0444">Lipid biosynthesis</keyword>
<keyword id="KW-0443">Lipid metabolism</keyword>
<keyword id="KW-0547">Nucleotide-binding</keyword>
<keyword id="KW-1185">Reference proteome</keyword>
<keyword id="KW-0808">Transferase</keyword>
<dbReference type="EC" id="2.1.3.15" evidence="1"/>
<dbReference type="EMBL" id="CP001196">
    <property type="protein sequence ID" value="ACI91230.1"/>
    <property type="molecule type" value="Genomic_DNA"/>
</dbReference>
<dbReference type="EMBL" id="CP002826">
    <property type="protein sequence ID" value="AEI05155.1"/>
    <property type="molecule type" value="Genomic_DNA"/>
</dbReference>
<dbReference type="RefSeq" id="WP_012561262.1">
    <property type="nucleotide sequence ID" value="NC_015684.1"/>
</dbReference>
<dbReference type="SMR" id="B6JAC0"/>
<dbReference type="STRING" id="504832.OCA5_c04300"/>
<dbReference type="KEGG" id="oca:OCAR_4079"/>
<dbReference type="KEGG" id="ocg:OCA5_c04300"/>
<dbReference type="PATRIC" id="fig|504832.7.peg.451"/>
<dbReference type="eggNOG" id="COG0825">
    <property type="taxonomic scope" value="Bacteria"/>
</dbReference>
<dbReference type="HOGENOM" id="CLU_015486_0_2_5"/>
<dbReference type="OrthoDB" id="9808023at2"/>
<dbReference type="UniPathway" id="UPA00655">
    <property type="reaction ID" value="UER00711"/>
</dbReference>
<dbReference type="Proteomes" id="UP000007730">
    <property type="component" value="Chromosome"/>
</dbReference>
<dbReference type="GO" id="GO:0009317">
    <property type="term" value="C:acetyl-CoA carboxylase complex"/>
    <property type="evidence" value="ECO:0007669"/>
    <property type="project" value="InterPro"/>
</dbReference>
<dbReference type="GO" id="GO:0003989">
    <property type="term" value="F:acetyl-CoA carboxylase activity"/>
    <property type="evidence" value="ECO:0007669"/>
    <property type="project" value="InterPro"/>
</dbReference>
<dbReference type="GO" id="GO:0005524">
    <property type="term" value="F:ATP binding"/>
    <property type="evidence" value="ECO:0007669"/>
    <property type="project" value="UniProtKB-KW"/>
</dbReference>
<dbReference type="GO" id="GO:0016743">
    <property type="term" value="F:carboxyl- or carbamoyltransferase activity"/>
    <property type="evidence" value="ECO:0007669"/>
    <property type="project" value="UniProtKB-UniRule"/>
</dbReference>
<dbReference type="GO" id="GO:0006633">
    <property type="term" value="P:fatty acid biosynthetic process"/>
    <property type="evidence" value="ECO:0007669"/>
    <property type="project" value="UniProtKB-KW"/>
</dbReference>
<dbReference type="GO" id="GO:2001295">
    <property type="term" value="P:malonyl-CoA biosynthetic process"/>
    <property type="evidence" value="ECO:0007669"/>
    <property type="project" value="UniProtKB-UniRule"/>
</dbReference>
<dbReference type="Gene3D" id="3.90.226.10">
    <property type="entry name" value="2-enoyl-CoA Hydratase, Chain A, domain 1"/>
    <property type="match status" value="1"/>
</dbReference>
<dbReference type="HAMAP" id="MF_00823">
    <property type="entry name" value="AcetylCoA_CT_alpha"/>
    <property type="match status" value="1"/>
</dbReference>
<dbReference type="InterPro" id="IPR001095">
    <property type="entry name" value="Acetyl_CoA_COase_a_su"/>
</dbReference>
<dbReference type="InterPro" id="IPR029045">
    <property type="entry name" value="ClpP/crotonase-like_dom_sf"/>
</dbReference>
<dbReference type="InterPro" id="IPR011763">
    <property type="entry name" value="COA_CT_C"/>
</dbReference>
<dbReference type="NCBIfam" id="TIGR00513">
    <property type="entry name" value="accA"/>
    <property type="match status" value="1"/>
</dbReference>
<dbReference type="NCBIfam" id="NF041504">
    <property type="entry name" value="AccA_sub"/>
    <property type="match status" value="1"/>
</dbReference>
<dbReference type="NCBIfam" id="NF004344">
    <property type="entry name" value="PRK05724.1"/>
    <property type="match status" value="1"/>
</dbReference>
<dbReference type="PANTHER" id="PTHR42853">
    <property type="entry name" value="ACETYL-COENZYME A CARBOXYLASE CARBOXYL TRANSFERASE SUBUNIT ALPHA"/>
    <property type="match status" value="1"/>
</dbReference>
<dbReference type="PANTHER" id="PTHR42853:SF3">
    <property type="entry name" value="ACETYL-COENZYME A CARBOXYLASE CARBOXYL TRANSFERASE SUBUNIT ALPHA, CHLOROPLASTIC"/>
    <property type="match status" value="1"/>
</dbReference>
<dbReference type="Pfam" id="PF03255">
    <property type="entry name" value="ACCA"/>
    <property type="match status" value="1"/>
</dbReference>
<dbReference type="PRINTS" id="PR01069">
    <property type="entry name" value="ACCCTRFRASEA"/>
</dbReference>
<dbReference type="SUPFAM" id="SSF52096">
    <property type="entry name" value="ClpP/crotonase"/>
    <property type="match status" value="1"/>
</dbReference>
<dbReference type="PROSITE" id="PS50989">
    <property type="entry name" value="COA_CT_CTER"/>
    <property type="match status" value="1"/>
</dbReference>
<proteinExistence type="inferred from homology"/>
<organism>
    <name type="scientific">Afipia carboxidovorans (strain ATCC 49405 / DSM 1227 / KCTC 32145 / OM5)</name>
    <name type="common">Oligotropha carboxidovorans</name>
    <dbReference type="NCBI Taxonomy" id="504832"/>
    <lineage>
        <taxon>Bacteria</taxon>
        <taxon>Pseudomonadati</taxon>
        <taxon>Pseudomonadota</taxon>
        <taxon>Alphaproteobacteria</taxon>
        <taxon>Hyphomicrobiales</taxon>
        <taxon>Nitrobacteraceae</taxon>
        <taxon>Afipia</taxon>
    </lineage>
</organism>
<evidence type="ECO:0000255" key="1">
    <source>
        <dbReference type="HAMAP-Rule" id="MF_00823"/>
    </source>
</evidence>
<evidence type="ECO:0000255" key="2">
    <source>
        <dbReference type="PROSITE-ProRule" id="PRU01137"/>
    </source>
</evidence>
<gene>
    <name evidence="1" type="primary">accA</name>
    <name type="ordered locus">OCAR_4079</name>
    <name type="ordered locus">OCA5_c04300</name>
</gene>
<feature type="chain" id="PRO_1000134502" description="Acetyl-coenzyme A carboxylase carboxyl transferase subunit alpha">
    <location>
        <begin position="1"/>
        <end position="320"/>
    </location>
</feature>
<feature type="domain" description="CoA carboxyltransferase C-terminal" evidence="2">
    <location>
        <begin position="42"/>
        <end position="295"/>
    </location>
</feature>
<name>ACCA_AFIC5</name>
<sequence length="320" mass="34656">MADPIRSYLDFEKPVAELDSKIDELRALAANGSDISEEISRIEDKAKAALHELYANLTPWQKTQVARHPQRPHCIDYIAGLITEFTPLAGDRKFSDDDAMIGGFGRFRGESVCIIGQEKGSTTESRLKHNFGMARPEGYRKAVRLMDMADRFGIRILSLVDTAGAYPGIGAEERGQAEAIARSTEACLNLTVPNVAVILGEGGSGGAIAIATANRVMMLEHAVYSVISPEGAASILWRDATKAQEAATNLKVTAQDLARFGIIDTVLKEPPGGAHRDPADMIARTGDAIAQAFSDLAPLDPKTVRTQRRQKFLDIGRRLG</sequence>
<reference key="1">
    <citation type="journal article" date="2008" name="J. Bacteriol.">
        <title>Genome sequence of the chemolithoautotrophic bacterium Oligotropha carboxidovorans OM5T.</title>
        <authorList>
            <person name="Paul D."/>
            <person name="Bridges S."/>
            <person name="Burgess S.C."/>
            <person name="Dandass Y."/>
            <person name="Lawrence M.L."/>
        </authorList>
    </citation>
    <scope>NUCLEOTIDE SEQUENCE [LARGE SCALE GENOMIC DNA]</scope>
    <source>
        <strain>ATCC 49405 / DSM 1227 / KCTC 32145 / OM5</strain>
    </source>
</reference>
<reference key="2">
    <citation type="journal article" date="2011" name="J. Bacteriol.">
        <title>Complete genome sequences of the chemolithoautotrophic Oligotropha carboxidovorans strains OM4 and OM5.</title>
        <authorList>
            <person name="Volland S."/>
            <person name="Rachinger M."/>
            <person name="Strittmatter A."/>
            <person name="Daniel R."/>
            <person name="Gottschalk G."/>
            <person name="Meyer O."/>
        </authorList>
    </citation>
    <scope>NUCLEOTIDE SEQUENCE [LARGE SCALE GENOMIC DNA]</scope>
    <source>
        <strain>ATCC 49405 / DSM 1227 / KCTC 32145 / OM5</strain>
    </source>
</reference>
<protein>
    <recommendedName>
        <fullName evidence="1">Acetyl-coenzyme A carboxylase carboxyl transferase subunit alpha</fullName>
        <shortName evidence="1">ACCase subunit alpha</shortName>
        <shortName evidence="1">Acetyl-CoA carboxylase carboxyltransferase subunit alpha</shortName>
        <ecNumber evidence="1">2.1.3.15</ecNumber>
    </recommendedName>
</protein>
<accession>B6JAC0</accession>
<accession>F8BV95</accession>